<protein>
    <recommendedName>
        <fullName evidence="1">DNA-directed RNA polymerase subunit Rpo1N</fullName>
        <ecNumber evidence="1">2.7.7.6</ecNumber>
    </recommendedName>
    <alternativeName>
        <fullName evidence="1">DNA-directed RNA polymerase subunit A'</fullName>
    </alternativeName>
</protein>
<feature type="chain" id="PRO_0000074005" description="DNA-directed RNA polymerase subunit Rpo1N">
    <location>
        <begin position="1"/>
        <end position="865"/>
    </location>
</feature>
<feature type="region of interest" description="Disordered" evidence="2">
    <location>
        <begin position="500"/>
        <end position="531"/>
    </location>
</feature>
<feature type="compositionally biased region" description="Basic and acidic residues" evidence="2">
    <location>
        <begin position="515"/>
        <end position="531"/>
    </location>
</feature>
<feature type="binding site" evidence="1">
    <location>
        <position position="60"/>
    </location>
    <ligand>
        <name>Zn(2+)</name>
        <dbReference type="ChEBI" id="CHEBI:29105"/>
        <label>1</label>
    </ligand>
</feature>
<feature type="binding site" evidence="1">
    <location>
        <position position="63"/>
    </location>
    <ligand>
        <name>Zn(2+)</name>
        <dbReference type="ChEBI" id="CHEBI:29105"/>
        <label>1</label>
    </ligand>
</feature>
<feature type="binding site" evidence="1">
    <location>
        <position position="70"/>
    </location>
    <ligand>
        <name>Zn(2+)</name>
        <dbReference type="ChEBI" id="CHEBI:29105"/>
        <label>1</label>
    </ligand>
</feature>
<feature type="binding site" evidence="1">
    <location>
        <position position="73"/>
    </location>
    <ligand>
        <name>Zn(2+)</name>
        <dbReference type="ChEBI" id="CHEBI:29105"/>
        <label>1</label>
    </ligand>
</feature>
<feature type="binding site" evidence="1">
    <location>
        <position position="100"/>
    </location>
    <ligand>
        <name>Zn(2+)</name>
        <dbReference type="ChEBI" id="CHEBI:29105"/>
        <label>2</label>
    </ligand>
</feature>
<feature type="binding site" evidence="1">
    <location>
        <position position="103"/>
    </location>
    <ligand>
        <name>Zn(2+)</name>
        <dbReference type="ChEBI" id="CHEBI:29105"/>
        <label>2</label>
    </ligand>
</feature>
<feature type="binding site" evidence="1">
    <location>
        <position position="146"/>
    </location>
    <ligand>
        <name>Zn(2+)</name>
        <dbReference type="ChEBI" id="CHEBI:29105"/>
        <label>2</label>
    </ligand>
</feature>
<feature type="binding site" evidence="1">
    <location>
        <position position="149"/>
    </location>
    <ligand>
        <name>Zn(2+)</name>
        <dbReference type="ChEBI" id="CHEBI:29105"/>
        <label>2</label>
    </ligand>
</feature>
<feature type="binding site" evidence="1">
    <location>
        <position position="451"/>
    </location>
    <ligand>
        <name>Mg(2+)</name>
        <dbReference type="ChEBI" id="CHEBI:18420"/>
    </ligand>
</feature>
<feature type="binding site" evidence="1">
    <location>
        <position position="453"/>
    </location>
    <ligand>
        <name>Mg(2+)</name>
        <dbReference type="ChEBI" id="CHEBI:18420"/>
    </ligand>
</feature>
<feature type="binding site" evidence="1">
    <location>
        <position position="455"/>
    </location>
    <ligand>
        <name>Mg(2+)</name>
        <dbReference type="ChEBI" id="CHEBI:18420"/>
    </ligand>
</feature>
<proteinExistence type="inferred from homology"/>
<reference key="1">
    <citation type="journal article" date="1988" name="Nucleic Acids Res.">
        <title>Relatedness of archaebacterial RNA polymerase core subunits to their eubacterial and eukaryotic equivalents.</title>
        <authorList>
            <person name="Berghoefer B."/>
            <person name="Kroeckel L."/>
            <person name="Koertner C."/>
            <person name="Truss M."/>
            <person name="Schallenberg J."/>
            <person name="Klein A."/>
        </authorList>
    </citation>
    <scope>NUCLEOTIDE SEQUENCE [GENOMIC DNA]</scope>
</reference>
<evidence type="ECO:0000255" key="1">
    <source>
        <dbReference type="HAMAP-Rule" id="MF_00863"/>
    </source>
</evidence>
<evidence type="ECO:0000256" key="2">
    <source>
        <dbReference type="SAM" id="MobiDB-lite"/>
    </source>
</evidence>
<comment type="function">
    <text evidence="1">DNA-dependent RNA polymerase (RNAP) catalyzes the transcription of DNA into RNA using the four ribonucleoside triphosphates as substrates. Forms the clamp head domain.</text>
</comment>
<comment type="catalytic activity">
    <reaction evidence="1">
        <text>RNA(n) + a ribonucleoside 5'-triphosphate = RNA(n+1) + diphosphate</text>
        <dbReference type="Rhea" id="RHEA:21248"/>
        <dbReference type="Rhea" id="RHEA-COMP:14527"/>
        <dbReference type="Rhea" id="RHEA-COMP:17342"/>
        <dbReference type="ChEBI" id="CHEBI:33019"/>
        <dbReference type="ChEBI" id="CHEBI:61557"/>
        <dbReference type="ChEBI" id="CHEBI:140395"/>
        <dbReference type="EC" id="2.7.7.6"/>
    </reaction>
</comment>
<comment type="cofactor">
    <cofactor evidence="1">
        <name>Mg(2+)</name>
        <dbReference type="ChEBI" id="CHEBI:18420"/>
    </cofactor>
</comment>
<comment type="cofactor">
    <cofactor evidence="1">
        <name>Zn(2+)</name>
        <dbReference type="ChEBI" id="CHEBI:29105"/>
    </cofactor>
    <text evidence="1">Binds at least 2 Zn(2+) per subunit.</text>
</comment>
<comment type="subunit">
    <text evidence="1">Part of the RNA polymerase complex.</text>
</comment>
<comment type="subcellular location">
    <subcellularLocation>
        <location evidence="1">Cytoplasm</location>
    </subcellularLocation>
</comment>
<comment type="similarity">
    <text evidence="1">Belongs to the RNA polymerase beta' chain family.</text>
</comment>
<accession>P09846</accession>
<organism>
    <name type="scientific">Methanothermobacter thermautotrophicus (strain Winter)</name>
    <name type="common">Methanobacterium thermoautotrophicum</name>
    <dbReference type="NCBI Taxonomy" id="79930"/>
    <lineage>
        <taxon>Archaea</taxon>
        <taxon>Methanobacteriati</taxon>
        <taxon>Methanobacteriota</taxon>
        <taxon>Methanomada group</taxon>
        <taxon>Methanobacteria</taxon>
        <taxon>Methanobacteriales</taxon>
        <taxon>Methanobacteriaceae</taxon>
        <taxon>Methanothermobacter</taxon>
    </lineage>
</organism>
<name>RPO1N_METTW</name>
<gene>
    <name evidence="1" type="primary">rpo1N</name>
    <name evidence="1" type="synonym">rpoA1</name>
    <name type="synonym">rpoT</name>
</gene>
<keyword id="KW-0963">Cytoplasm</keyword>
<keyword id="KW-0238">DNA-binding</keyword>
<keyword id="KW-0240">DNA-directed RNA polymerase</keyword>
<keyword id="KW-0460">Magnesium</keyword>
<keyword id="KW-0479">Metal-binding</keyword>
<keyword id="KW-0548">Nucleotidyltransferase</keyword>
<keyword id="KW-0804">Transcription</keyword>
<keyword id="KW-0808">Transferase</keyword>
<keyword id="KW-0862">Zinc</keyword>
<dbReference type="EC" id="2.7.7.6" evidence="1"/>
<dbReference type="EMBL" id="X08038">
    <property type="protein sequence ID" value="CAA30838.1"/>
    <property type="molecule type" value="Genomic_DNA"/>
</dbReference>
<dbReference type="PIR" id="S02196">
    <property type="entry name" value="S02196"/>
</dbReference>
<dbReference type="SMR" id="P09846"/>
<dbReference type="GO" id="GO:0005737">
    <property type="term" value="C:cytoplasm"/>
    <property type="evidence" value="ECO:0007669"/>
    <property type="project" value="UniProtKB-SubCell"/>
</dbReference>
<dbReference type="GO" id="GO:0000428">
    <property type="term" value="C:DNA-directed RNA polymerase complex"/>
    <property type="evidence" value="ECO:0007669"/>
    <property type="project" value="UniProtKB-KW"/>
</dbReference>
<dbReference type="GO" id="GO:0003677">
    <property type="term" value="F:DNA binding"/>
    <property type="evidence" value="ECO:0007669"/>
    <property type="project" value="UniProtKB-UniRule"/>
</dbReference>
<dbReference type="GO" id="GO:0003899">
    <property type="term" value="F:DNA-directed RNA polymerase activity"/>
    <property type="evidence" value="ECO:0007669"/>
    <property type="project" value="UniProtKB-UniRule"/>
</dbReference>
<dbReference type="GO" id="GO:0000287">
    <property type="term" value="F:magnesium ion binding"/>
    <property type="evidence" value="ECO:0007669"/>
    <property type="project" value="UniProtKB-UniRule"/>
</dbReference>
<dbReference type="GO" id="GO:0008270">
    <property type="term" value="F:zinc ion binding"/>
    <property type="evidence" value="ECO:0007669"/>
    <property type="project" value="UniProtKB-UniRule"/>
</dbReference>
<dbReference type="GO" id="GO:0006351">
    <property type="term" value="P:DNA-templated transcription"/>
    <property type="evidence" value="ECO:0007669"/>
    <property type="project" value="UniProtKB-UniRule"/>
</dbReference>
<dbReference type="CDD" id="cd02582">
    <property type="entry name" value="RNAP_archeal_A"/>
    <property type="match status" value="1"/>
</dbReference>
<dbReference type="FunFam" id="2.40.40.20:FF:000019">
    <property type="entry name" value="DNA-directed RNA polymerase II subunit RPB1"/>
    <property type="match status" value="1"/>
</dbReference>
<dbReference type="Gene3D" id="1.10.10.1950">
    <property type="match status" value="1"/>
</dbReference>
<dbReference type="Gene3D" id="1.10.132.30">
    <property type="match status" value="1"/>
</dbReference>
<dbReference type="Gene3D" id="2.40.40.20">
    <property type="match status" value="1"/>
</dbReference>
<dbReference type="Gene3D" id="2.60.40.2940">
    <property type="match status" value="1"/>
</dbReference>
<dbReference type="Gene3D" id="6.10.250.2940">
    <property type="match status" value="1"/>
</dbReference>
<dbReference type="Gene3D" id="6.20.50.80">
    <property type="match status" value="1"/>
</dbReference>
<dbReference type="Gene3D" id="3.30.1490.180">
    <property type="entry name" value="RNA polymerase ii"/>
    <property type="match status" value="1"/>
</dbReference>
<dbReference type="Gene3D" id="4.10.860.120">
    <property type="entry name" value="RNA polymerase II, clamp domain"/>
    <property type="match status" value="2"/>
</dbReference>
<dbReference type="HAMAP" id="MF_00863">
    <property type="entry name" value="RNApol_arch_Rpo1N"/>
    <property type="match status" value="1"/>
</dbReference>
<dbReference type="InterPro" id="IPR045867">
    <property type="entry name" value="DNA-dir_RpoC_beta_prime"/>
</dbReference>
<dbReference type="InterPro" id="IPR000722">
    <property type="entry name" value="RNA_pol_asu"/>
</dbReference>
<dbReference type="InterPro" id="IPR006592">
    <property type="entry name" value="RNA_pol_N"/>
</dbReference>
<dbReference type="InterPro" id="IPR007080">
    <property type="entry name" value="RNA_pol_Rpb1_1"/>
</dbReference>
<dbReference type="InterPro" id="IPR007066">
    <property type="entry name" value="RNA_pol_Rpb1_3"/>
</dbReference>
<dbReference type="InterPro" id="IPR007083">
    <property type="entry name" value="RNA_pol_Rpb1_4"/>
</dbReference>
<dbReference type="InterPro" id="IPR007081">
    <property type="entry name" value="RNA_pol_Rpb1_5"/>
</dbReference>
<dbReference type="InterPro" id="IPR044893">
    <property type="entry name" value="RNA_pol_Rpb1_clamp_domain"/>
</dbReference>
<dbReference type="InterPro" id="IPR038120">
    <property type="entry name" value="Rpb1_funnel_sf"/>
</dbReference>
<dbReference type="InterPro" id="IPR012758">
    <property type="entry name" value="RPO1N"/>
</dbReference>
<dbReference type="NCBIfam" id="NF006336">
    <property type="entry name" value="PRK08566.1"/>
    <property type="match status" value="1"/>
</dbReference>
<dbReference type="NCBIfam" id="TIGR02390">
    <property type="entry name" value="RNA_pol_rpoA1"/>
    <property type="match status" value="1"/>
</dbReference>
<dbReference type="PANTHER" id="PTHR19376">
    <property type="entry name" value="DNA-DIRECTED RNA POLYMERASE"/>
    <property type="match status" value="1"/>
</dbReference>
<dbReference type="PANTHER" id="PTHR19376:SF32">
    <property type="entry name" value="DNA-DIRECTED RNA POLYMERASE III SUBUNIT RPC1"/>
    <property type="match status" value="1"/>
</dbReference>
<dbReference type="Pfam" id="PF04997">
    <property type="entry name" value="RNA_pol_Rpb1_1"/>
    <property type="match status" value="1"/>
</dbReference>
<dbReference type="Pfam" id="PF00623">
    <property type="entry name" value="RNA_pol_Rpb1_2"/>
    <property type="match status" value="1"/>
</dbReference>
<dbReference type="Pfam" id="PF04983">
    <property type="entry name" value="RNA_pol_Rpb1_3"/>
    <property type="match status" value="1"/>
</dbReference>
<dbReference type="Pfam" id="PF05000">
    <property type="entry name" value="RNA_pol_Rpb1_4"/>
    <property type="match status" value="1"/>
</dbReference>
<dbReference type="Pfam" id="PF04998">
    <property type="entry name" value="RNA_pol_Rpb1_5"/>
    <property type="match status" value="1"/>
</dbReference>
<dbReference type="SMART" id="SM00663">
    <property type="entry name" value="RPOLA_N"/>
    <property type="match status" value="1"/>
</dbReference>
<dbReference type="SUPFAM" id="SSF64484">
    <property type="entry name" value="beta and beta-prime subunits of DNA dependent RNA-polymerase"/>
    <property type="match status" value="1"/>
</dbReference>
<sequence>MRGILKKISQINFGLMSPEDIRKMSVAQIVTPDTYDEDGYPIENELMDPRLGVIGSSLRCRSCGAKGGECPGHFGSINLARPVIHVGFADTIHKILSSICRKCSRILLTETEIQDYRQRILEAMEREESLTPIIKEIYAEARRDRCPHCEEEQEEIKLDKPVSIVEGDYKLTPSEVRERLERITDNDSLLLGVNPEVARPEWMVLTVLPVPPVTVRPSITLETGERSEDDLTHKLVDILRINQRLKENMEAGAPQLIVEDLWELLQYHVTTYFDNEASGVPPARHRSGRPLKTLAQRLKGKEGRFRSNLSGKRVNFSARTVVSPDPNVSVNEVGVPELIAKEVTVPVYVTEWNIDRMKEHIENGPDVHPGANYVIRPDGRKIRAYNETKDVVLENLKPGYIVERHLKDGDIVLFNRQPSLHRMSMMAHEVRVLPYKTFRLNLCVCPPYNADFDGDEMNMHVFQTEESRAEAKTLMRVQDHILSPRFRDLSSGVYTTISQEHTSSQGKRLFSVRSRPPDPQEGRAPPPDREGREWTVKEIFSMVLPDDLNMVYLAEICRKCDECLEMDWENDAYVVIENGQLITGVIDEKAYGAFAGKILDQIVKEYGSDAAKEFLDSATKLAIAGIMHAGFTTSTNDEEIPEEAKERIEAHLRNAEARVDQLIEAYENGELEPLPGRSLEETLEMKIMQVLGEAKDKSGEIAESYFDMDENHAVIMALTGARGAMLNLTQITACVGQQSVHGGRITRGYDNRTLPHFKKGELGAKSRGFVHSSYKEDSILLEFMGGREGLVDTAIRTAQSGYMQRRLVNALQDLTVDENGRVVDNRGVIIQTRFGEDGVDPAKSDYGKIVDLDKLVQEIRLKSGK</sequence>